<gene>
    <name type="ORF">ORF2</name>
</gene>
<organismHost>
    <name type="scientific">Plantago asiatica</name>
    <dbReference type="NCBI Taxonomy" id="197796"/>
</organismHost>
<protein>
    <recommendedName>
        <fullName>Movement and silencing protein TGBp1</fullName>
    </recommendedName>
    <alternativeName>
        <fullName>25 kDa protein</fullName>
    </alternativeName>
    <alternativeName>
        <fullName>Silencing suppressor P25</fullName>
    </alternativeName>
    <alternativeName>
        <fullName>Triple gene block 1 protein</fullName>
        <shortName>TGBp1</shortName>
    </alternativeName>
</protein>
<accession>Q07517</accession>
<keyword id="KW-1035">Host cytoplasm</keyword>
<keyword id="KW-0945">Host-virus interaction</keyword>
<keyword id="KW-1090">Inhibition of host innate immune response by virus</keyword>
<keyword id="KW-1185">Reference proteome</keyword>
<keyword id="KW-0694">RNA-binding</keyword>
<keyword id="KW-0941">Suppressor of RNA silencing</keyword>
<keyword id="KW-0813">Transport</keyword>
<keyword id="KW-0899">Viral immunoevasion</keyword>
<keyword id="KW-0916">Viral movement protein</keyword>
<name>TGB1_P1AMV</name>
<feature type="chain" id="PRO_0000222568" description="Movement and silencing protein TGBp1">
    <location>
        <begin position="1"/>
        <end position="230"/>
    </location>
</feature>
<feature type="domain" description="(+)RNA virus helicase ATP-binding">
    <location>
        <begin position="1"/>
        <end position="114"/>
    </location>
</feature>
<feature type="domain" description="(+)RNA virus helicase C-terminal">
    <location>
        <begin position="115"/>
        <end position="230"/>
    </location>
</feature>
<feature type="sequence conflict" description="In Ref. 2; AAB26348." evidence="2" ref="2">
    <original>H</original>
    <variation>L</variation>
    <location>
        <position position="27"/>
    </location>
</feature>
<reference key="1">
    <citation type="journal article" date="1994" name="J. Gen. Virol.">
        <title>Genome characterization and taxonomy of Plantago asiatica mosaic potexvirus.</title>
        <authorList>
            <person name="Solovyev A.G."/>
            <person name="Novikov V.K."/>
            <person name="Merits A."/>
            <person name="Savenkov E.I."/>
            <person name="Zelenina D.A."/>
            <person name="Tyulkina L.G."/>
            <person name="Morozov S.Y."/>
        </authorList>
    </citation>
    <scope>NUCLEOTIDE SEQUENCE [GENOMIC RNA]</scope>
</reference>
<reference key="2">
    <citation type="journal article" date="1993" name="Dokl. Akad. Nauk">
        <title>Primary structure of the triple block RNA genes of the Plantago asiatica mosaic virus.</title>
        <authorList>
            <person name="Solovyev A.G."/>
            <person name="Novikov V.K."/>
            <person name="Morozov S.I."/>
            <person name="Kagramanov V.N."/>
            <person name="Atabekov I.G."/>
        </authorList>
    </citation>
    <scope>NUCLEOTIDE SEQUENCE [GENOMIC RNA]</scope>
</reference>
<reference key="3">
    <citation type="journal article" date="2005" name="Mol. Plant Microbe Interact.">
        <title>A new cell-to-cell transport model for Potexviruses.</title>
        <authorList>
            <person name="Verchot-Lubicz J."/>
        </authorList>
    </citation>
    <scope>REVIEW</scope>
</reference>
<sequence>MDSIINALTSNNFQRTNTPISKPLVVHAVAGAGKTTLIQNLLPEHPNLAAQTAGSPQTPNLTGAFIRKLTCPESNKINLLDEYAALQPLKGSWDVVLADPLQHPGLALRPHFIKSVSHRLCPATTRLISKLVCPCTSSRTEESTIQFSGLFEGPLLGTVIALDQTTQALLTAHGAHFLCPTAALGLEFDTVTVVSALPLEEVADKVGLYISLSRHRSQLHVRSPPPHPSH</sequence>
<dbReference type="EMBL" id="Z21647">
    <property type="protein sequence ID" value="CAA79762.1"/>
    <property type="molecule type" value="Genomic_RNA"/>
</dbReference>
<dbReference type="EMBL" id="S61526">
    <property type="protein sequence ID" value="AAB26348.1"/>
    <property type="molecule type" value="Genomic_RNA"/>
</dbReference>
<dbReference type="PIR" id="S34231">
    <property type="entry name" value="S34231"/>
</dbReference>
<dbReference type="RefSeq" id="NP_620837.1">
    <property type="nucleotide sequence ID" value="NC_003849.1"/>
</dbReference>
<dbReference type="SMR" id="Q07517"/>
<dbReference type="KEGG" id="vg:944433"/>
<dbReference type="OrthoDB" id="16070at10239"/>
<dbReference type="Proteomes" id="UP000009190">
    <property type="component" value="Genome"/>
</dbReference>
<dbReference type="GO" id="GO:0030430">
    <property type="term" value="C:host cell cytoplasm"/>
    <property type="evidence" value="ECO:0007669"/>
    <property type="project" value="UniProtKB-SubCell"/>
</dbReference>
<dbReference type="GO" id="GO:0005524">
    <property type="term" value="F:ATP binding"/>
    <property type="evidence" value="ECO:0007669"/>
    <property type="project" value="InterPro"/>
</dbReference>
<dbReference type="GO" id="GO:0003723">
    <property type="term" value="F:RNA binding"/>
    <property type="evidence" value="ECO:0007669"/>
    <property type="project" value="UniProtKB-KW"/>
</dbReference>
<dbReference type="GO" id="GO:0052170">
    <property type="term" value="P:symbiont-mediated suppression of host innate immune response"/>
    <property type="evidence" value="ECO:0007669"/>
    <property type="project" value="UniProtKB-KW"/>
</dbReference>
<dbReference type="GO" id="GO:0046740">
    <property type="term" value="P:transport of virus in host, cell to cell"/>
    <property type="evidence" value="ECO:0007669"/>
    <property type="project" value="UniProtKB-KW"/>
</dbReference>
<dbReference type="InterPro" id="IPR027351">
    <property type="entry name" value="(+)RNA_virus_helicase_core_dom"/>
</dbReference>
<dbReference type="Pfam" id="PF01443">
    <property type="entry name" value="Viral_helicase1"/>
    <property type="match status" value="1"/>
</dbReference>
<dbReference type="PROSITE" id="PS51657">
    <property type="entry name" value="PSRV_HELICASE"/>
    <property type="match status" value="1"/>
</dbReference>
<comment type="function">
    <text evidence="1">Transports viral genome to neighboring plant cells directly through plasmosdesmata, without any budding. The movement protein allows efficient cell to cell propagation, by bypassing the host cell wall barrier. Increases plasmodesma size exclusion limit. Acts as a suppressor of RNA-mediated gene silencing, also known as post-transcriptional gene silencing (PTGS), a mechanism of plant viral defense that limits the accumulation of viral RNAs (By similarity).</text>
</comment>
<comment type="subunit">
    <text evidence="1">Homodimer and homooligomer. Interacts with capsid protein. Interacts with host AGO1; this interaction targets the host protein for degradation, thereby suppressing the antiviral RNA silencing (By similarity).</text>
</comment>
<comment type="subcellular location">
    <subcellularLocation>
        <location evidence="1">Host cytoplasm</location>
    </subcellularLocation>
</comment>
<comment type="miscellaneous">
    <text>TGBp1, TGBp2 and TGBp3 seem to act together for cell-to-cell propagation. TGBp1 is the main movement protein that physically cross the plasmodesma with the viral genome. TGBp2 and TGBp3 would facilitate TGBp1 function.</text>
</comment>
<comment type="similarity">
    <text evidence="2">Belongs to the Tymovirales TGBp1 protein family.</text>
</comment>
<proteinExistence type="inferred from homology"/>
<evidence type="ECO:0000250" key="1"/>
<evidence type="ECO:0000305" key="2"/>
<organism>
    <name type="scientific">Plantago asiatica mosaic potexvirus</name>
    <name type="common">P1AMV</name>
    <dbReference type="NCBI Taxonomy" id="28354"/>
    <lineage>
        <taxon>Viruses</taxon>
        <taxon>Riboviria</taxon>
        <taxon>Orthornavirae</taxon>
        <taxon>Kitrinoviricota</taxon>
        <taxon>Alsuviricetes</taxon>
        <taxon>Tymovirales</taxon>
        <taxon>Alphaflexiviridae</taxon>
        <taxon>Potexvirus</taxon>
    </lineage>
</organism>